<gene>
    <name evidence="2" type="primary">psaC</name>
</gene>
<dbReference type="EC" id="1.97.1.12" evidence="2"/>
<dbReference type="EMBL" id="AP005672">
    <property type="protein sequence ID" value="BAC85089.1"/>
    <property type="molecule type" value="Genomic_DNA"/>
</dbReference>
<dbReference type="RefSeq" id="NP_904239.1">
    <property type="nucleotide sequence ID" value="NC_005087.2"/>
</dbReference>
<dbReference type="RefSeq" id="YP_009477569.1">
    <property type="nucleotide sequence ID" value="NC_037465.1"/>
</dbReference>
<dbReference type="PDB" id="6L35">
    <property type="method" value="EM"/>
    <property type="resolution" value="3.23 A"/>
    <property type="chains" value="C=2-81"/>
</dbReference>
<dbReference type="PDB" id="7KSQ">
    <property type="method" value="EM"/>
    <property type="resolution" value="2.80 A"/>
    <property type="chains" value="C=2-81"/>
</dbReference>
<dbReference type="PDB" id="7KUX">
    <property type="method" value="EM"/>
    <property type="resolution" value="2.80 A"/>
    <property type="chains" value="C=2-81"/>
</dbReference>
<dbReference type="PDB" id="7XQP">
    <property type="method" value="EM"/>
    <property type="resolution" value="2.68 A"/>
    <property type="chains" value="C=2-81"/>
</dbReference>
<dbReference type="PDB" id="8HTU">
    <property type="method" value="EM"/>
    <property type="resolution" value="2.87 A"/>
    <property type="chains" value="C=1-81"/>
</dbReference>
<dbReference type="PDBsum" id="6L35"/>
<dbReference type="PDBsum" id="7KSQ"/>
<dbReference type="PDBsum" id="7KUX"/>
<dbReference type="PDBsum" id="7XQP"/>
<dbReference type="PDBsum" id="8HTU"/>
<dbReference type="EMDB" id="EMD-0821"/>
<dbReference type="EMDB" id="EMD-23023"/>
<dbReference type="EMDB" id="EMD-23040"/>
<dbReference type="EMDB" id="EMD-33401"/>
<dbReference type="EMDB" id="EMD-35018"/>
<dbReference type="SMR" id="Q6YXQ2"/>
<dbReference type="FunCoup" id="Q6YXQ2">
    <property type="interactions" value="379"/>
</dbReference>
<dbReference type="STRING" id="3218.Q6YXQ2"/>
<dbReference type="GeneID" id="2546790"/>
<dbReference type="GeneID" id="36487214"/>
<dbReference type="KEGG" id="ppp:2546790"/>
<dbReference type="InParanoid" id="Q6YXQ2"/>
<dbReference type="OrthoDB" id="1865383at2759"/>
<dbReference type="Proteomes" id="UP000006727">
    <property type="component" value="Chloroplast"/>
</dbReference>
<dbReference type="GO" id="GO:0009535">
    <property type="term" value="C:chloroplast thylakoid membrane"/>
    <property type="evidence" value="ECO:0007669"/>
    <property type="project" value="UniProtKB-SubCell"/>
</dbReference>
<dbReference type="GO" id="GO:0009522">
    <property type="term" value="C:photosystem I"/>
    <property type="evidence" value="ECO:0007669"/>
    <property type="project" value="UniProtKB-KW"/>
</dbReference>
<dbReference type="GO" id="GO:0051539">
    <property type="term" value="F:4 iron, 4 sulfur cluster binding"/>
    <property type="evidence" value="ECO:0007669"/>
    <property type="project" value="UniProtKB-KW"/>
</dbReference>
<dbReference type="GO" id="GO:0009055">
    <property type="term" value="F:electron transfer activity"/>
    <property type="evidence" value="ECO:0007669"/>
    <property type="project" value="UniProtKB-UniRule"/>
</dbReference>
<dbReference type="GO" id="GO:0046872">
    <property type="term" value="F:metal ion binding"/>
    <property type="evidence" value="ECO:0007669"/>
    <property type="project" value="UniProtKB-KW"/>
</dbReference>
<dbReference type="GO" id="GO:0016491">
    <property type="term" value="F:oxidoreductase activity"/>
    <property type="evidence" value="ECO:0007669"/>
    <property type="project" value="UniProtKB-KW"/>
</dbReference>
<dbReference type="GO" id="GO:0015979">
    <property type="term" value="P:photosynthesis"/>
    <property type="evidence" value="ECO:0000318"/>
    <property type="project" value="GO_Central"/>
</dbReference>
<dbReference type="GO" id="GO:0009773">
    <property type="term" value="P:photosynthetic electron transport in photosystem I"/>
    <property type="evidence" value="ECO:0007669"/>
    <property type="project" value="InterPro"/>
</dbReference>
<dbReference type="FunFam" id="3.30.70.20:FF:000001">
    <property type="entry name" value="Photosystem I iron-sulfur center"/>
    <property type="match status" value="1"/>
</dbReference>
<dbReference type="Gene3D" id="3.30.70.20">
    <property type="match status" value="1"/>
</dbReference>
<dbReference type="HAMAP" id="MF_01303">
    <property type="entry name" value="PSI_PsaC"/>
    <property type="match status" value="1"/>
</dbReference>
<dbReference type="InterPro" id="IPR017896">
    <property type="entry name" value="4Fe4S_Fe-S-bd"/>
</dbReference>
<dbReference type="InterPro" id="IPR017900">
    <property type="entry name" value="4Fe4S_Fe_S_CS"/>
</dbReference>
<dbReference type="InterPro" id="IPR050157">
    <property type="entry name" value="PSI_iron-sulfur_center"/>
</dbReference>
<dbReference type="InterPro" id="IPR017491">
    <property type="entry name" value="PSI_PsaC"/>
</dbReference>
<dbReference type="NCBIfam" id="TIGR03048">
    <property type="entry name" value="PS_I_psaC"/>
    <property type="match status" value="1"/>
</dbReference>
<dbReference type="PANTHER" id="PTHR24960:SF79">
    <property type="entry name" value="PHOTOSYSTEM I IRON-SULFUR CENTER"/>
    <property type="match status" value="1"/>
</dbReference>
<dbReference type="PANTHER" id="PTHR24960">
    <property type="entry name" value="PHOTOSYSTEM I IRON-SULFUR CENTER-RELATED"/>
    <property type="match status" value="1"/>
</dbReference>
<dbReference type="Pfam" id="PF12838">
    <property type="entry name" value="Fer4_7"/>
    <property type="match status" value="1"/>
</dbReference>
<dbReference type="SUPFAM" id="SSF54862">
    <property type="entry name" value="4Fe-4S ferredoxins"/>
    <property type="match status" value="1"/>
</dbReference>
<dbReference type="PROSITE" id="PS00198">
    <property type="entry name" value="4FE4S_FER_1"/>
    <property type="match status" value="2"/>
</dbReference>
<dbReference type="PROSITE" id="PS51379">
    <property type="entry name" value="4FE4S_FER_2"/>
    <property type="match status" value="2"/>
</dbReference>
<sequence>MAHSVKIYDTCIGCTQCVRACPTDVLEMVPWDGCKASQIASAPRTEDCVGCKRCESACPTDFLSVRVYLGAETTRSMGLAY</sequence>
<comment type="function">
    <text evidence="2">Apoprotein for the two 4Fe-4S centers FA and FB of photosystem I (PSI); essential for photochemical activity. FB is the terminal electron acceptor of PSI, donating electrons to ferredoxin. The C-terminus interacts with PsaA/B/D and helps assemble the protein into the PSI complex. Required for binding of PsaD and PsaE to PSI. PSI is a plastocyanin-ferredoxin oxidoreductase, converting photonic excitation into a charge separation, which transfers an electron from the donor P700 chlorophyll pair to the spectroscopically characterized acceptors A0, A1, FX, FA and FB in turn.</text>
</comment>
<comment type="catalytic activity">
    <reaction evidence="2">
        <text>reduced [plastocyanin] + hnu + oxidized [2Fe-2S]-[ferredoxin] = oxidized [plastocyanin] + reduced [2Fe-2S]-[ferredoxin]</text>
        <dbReference type="Rhea" id="RHEA:30407"/>
        <dbReference type="Rhea" id="RHEA-COMP:10000"/>
        <dbReference type="Rhea" id="RHEA-COMP:10001"/>
        <dbReference type="Rhea" id="RHEA-COMP:10039"/>
        <dbReference type="Rhea" id="RHEA-COMP:10040"/>
        <dbReference type="ChEBI" id="CHEBI:29036"/>
        <dbReference type="ChEBI" id="CHEBI:30212"/>
        <dbReference type="ChEBI" id="CHEBI:33737"/>
        <dbReference type="ChEBI" id="CHEBI:33738"/>
        <dbReference type="ChEBI" id="CHEBI:49552"/>
        <dbReference type="EC" id="1.97.1.12"/>
    </reaction>
</comment>
<comment type="cofactor">
    <cofactor evidence="2">
        <name>[4Fe-4S] cluster</name>
        <dbReference type="ChEBI" id="CHEBI:49883"/>
    </cofactor>
    <text evidence="2">Binds 2 [4Fe-4S] clusters. Cluster 2 is most probably the spectroscopically characterized electron acceptor FA and cluster 1 is most probably FB.</text>
</comment>
<comment type="subunit">
    <text evidence="2">The eukaryotic PSI reaction center is composed of at least 11 subunits.</text>
</comment>
<comment type="subcellular location">
    <subcellularLocation>
        <location evidence="2">Plastid</location>
        <location evidence="2">Chloroplast thylakoid membrane</location>
        <topology evidence="2">Peripheral membrane protein</topology>
        <orientation evidence="2">Stromal side</orientation>
    </subcellularLocation>
</comment>
<name>PSAC_PHYPA</name>
<proteinExistence type="evidence at protein level"/>
<evidence type="ECO:0000250" key="1"/>
<evidence type="ECO:0000255" key="2">
    <source>
        <dbReference type="HAMAP-Rule" id="MF_01303"/>
    </source>
</evidence>
<evidence type="ECO:0007829" key="3">
    <source>
        <dbReference type="PDB" id="7KSQ"/>
    </source>
</evidence>
<evidence type="ECO:0007829" key="4">
    <source>
        <dbReference type="PDB" id="7XQP"/>
    </source>
</evidence>
<organism>
    <name type="scientific">Physcomitrium patens</name>
    <name type="common">Spreading-leaved earth moss</name>
    <name type="synonym">Physcomitrella patens</name>
    <dbReference type="NCBI Taxonomy" id="3218"/>
    <lineage>
        <taxon>Eukaryota</taxon>
        <taxon>Viridiplantae</taxon>
        <taxon>Streptophyta</taxon>
        <taxon>Embryophyta</taxon>
        <taxon>Bryophyta</taxon>
        <taxon>Bryophytina</taxon>
        <taxon>Bryopsida</taxon>
        <taxon>Funariidae</taxon>
        <taxon>Funariales</taxon>
        <taxon>Funariaceae</taxon>
        <taxon>Physcomitrium</taxon>
    </lineage>
</organism>
<reference key="1">
    <citation type="journal article" date="2003" name="Nucleic Acids Res.">
        <title>Complete chloroplast DNA sequence of the moss Physcomitrella patens: evidence for the loss and relocation of rpoA from the chloroplast to the nucleus.</title>
        <authorList>
            <person name="Sugiura C."/>
            <person name="Kobayashi Y."/>
            <person name="Setsuyuki A."/>
            <person name="Sugita C."/>
            <person name="Sugita M."/>
        </authorList>
    </citation>
    <scope>NUCLEOTIDE SEQUENCE [LARGE SCALE GENOMIC DNA]</scope>
    <source>
        <strain>cv. Gransden 2004</strain>
    </source>
</reference>
<feature type="initiator methionine" description="Removed" evidence="1">
    <location>
        <position position="1"/>
    </location>
</feature>
<feature type="chain" id="PRO_0000061997" description="Photosystem I iron-sulfur center">
    <location>
        <begin position="2"/>
        <end position="81"/>
    </location>
</feature>
<feature type="domain" description="4Fe-4S ferredoxin-type 1" evidence="2">
    <location>
        <begin position="2"/>
        <end position="31"/>
    </location>
</feature>
<feature type="domain" description="4Fe-4S ferredoxin-type 2" evidence="2">
    <location>
        <begin position="39"/>
        <end position="68"/>
    </location>
</feature>
<feature type="binding site" evidence="2">
    <location>
        <position position="11"/>
    </location>
    <ligand>
        <name>[4Fe-4S] cluster</name>
        <dbReference type="ChEBI" id="CHEBI:49883"/>
        <label>1</label>
    </ligand>
</feature>
<feature type="binding site" evidence="2">
    <location>
        <position position="14"/>
    </location>
    <ligand>
        <name>[4Fe-4S] cluster</name>
        <dbReference type="ChEBI" id="CHEBI:49883"/>
        <label>1</label>
    </ligand>
</feature>
<feature type="binding site" evidence="2">
    <location>
        <position position="17"/>
    </location>
    <ligand>
        <name>[4Fe-4S] cluster</name>
        <dbReference type="ChEBI" id="CHEBI:49883"/>
        <label>1</label>
    </ligand>
</feature>
<feature type="binding site" evidence="2">
    <location>
        <position position="21"/>
    </location>
    <ligand>
        <name>[4Fe-4S] cluster</name>
        <dbReference type="ChEBI" id="CHEBI:49883"/>
        <label>2</label>
    </ligand>
</feature>
<feature type="binding site" evidence="2">
    <location>
        <position position="48"/>
    </location>
    <ligand>
        <name>[4Fe-4S] cluster</name>
        <dbReference type="ChEBI" id="CHEBI:49883"/>
        <label>2</label>
    </ligand>
</feature>
<feature type="binding site" evidence="2">
    <location>
        <position position="51"/>
    </location>
    <ligand>
        <name>[4Fe-4S] cluster</name>
        <dbReference type="ChEBI" id="CHEBI:49883"/>
        <label>2</label>
    </ligand>
</feature>
<feature type="binding site" evidence="2">
    <location>
        <position position="54"/>
    </location>
    <ligand>
        <name>[4Fe-4S] cluster</name>
        <dbReference type="ChEBI" id="CHEBI:49883"/>
        <label>2</label>
    </ligand>
</feature>
<feature type="binding site" evidence="2">
    <location>
        <position position="58"/>
    </location>
    <ligand>
        <name>[4Fe-4S] cluster</name>
        <dbReference type="ChEBI" id="CHEBI:49883"/>
        <label>1</label>
    </ligand>
</feature>
<feature type="strand" evidence="4">
    <location>
        <begin position="4"/>
        <end position="8"/>
    </location>
</feature>
<feature type="helix" evidence="4">
    <location>
        <begin position="16"/>
        <end position="20"/>
    </location>
</feature>
<feature type="strand" evidence="3">
    <location>
        <begin position="22"/>
        <end position="24"/>
    </location>
</feature>
<feature type="strand" evidence="4">
    <location>
        <begin position="27"/>
        <end position="30"/>
    </location>
</feature>
<feature type="strand" evidence="4">
    <location>
        <begin position="32"/>
        <end position="34"/>
    </location>
</feature>
<feature type="strand" evidence="4">
    <location>
        <begin position="38"/>
        <end position="41"/>
    </location>
</feature>
<feature type="helix" evidence="4">
    <location>
        <begin position="45"/>
        <end position="47"/>
    </location>
</feature>
<feature type="helix" evidence="4">
    <location>
        <begin position="53"/>
        <end position="56"/>
    </location>
</feature>
<feature type="strand" evidence="4">
    <location>
        <begin position="60"/>
        <end position="62"/>
    </location>
</feature>
<feature type="strand" evidence="4">
    <location>
        <begin position="64"/>
        <end position="68"/>
    </location>
</feature>
<feature type="turn" evidence="4">
    <location>
        <begin position="74"/>
        <end position="78"/>
    </location>
</feature>
<geneLocation type="chloroplast"/>
<accession>Q6YXQ2</accession>
<keyword id="KW-0002">3D-structure</keyword>
<keyword id="KW-0004">4Fe-4S</keyword>
<keyword id="KW-0150">Chloroplast</keyword>
<keyword id="KW-0249">Electron transport</keyword>
<keyword id="KW-0408">Iron</keyword>
<keyword id="KW-0411">Iron-sulfur</keyword>
<keyword id="KW-0472">Membrane</keyword>
<keyword id="KW-0479">Metal-binding</keyword>
<keyword id="KW-0560">Oxidoreductase</keyword>
<keyword id="KW-0602">Photosynthesis</keyword>
<keyword id="KW-0603">Photosystem I</keyword>
<keyword id="KW-0934">Plastid</keyword>
<keyword id="KW-1185">Reference proteome</keyword>
<keyword id="KW-0677">Repeat</keyword>
<keyword id="KW-0793">Thylakoid</keyword>
<keyword id="KW-0813">Transport</keyword>
<protein>
    <recommendedName>
        <fullName evidence="2">Photosystem I iron-sulfur center</fullName>
        <ecNumber evidence="2">1.97.1.12</ecNumber>
    </recommendedName>
    <alternativeName>
        <fullName evidence="2">9 kDa polypeptide</fullName>
    </alternativeName>
    <alternativeName>
        <fullName evidence="2">PSI-C</fullName>
    </alternativeName>
    <alternativeName>
        <fullName evidence="2">Photosystem I subunit VII</fullName>
    </alternativeName>
    <alternativeName>
        <fullName evidence="2">PsaC</fullName>
    </alternativeName>
</protein>